<dbReference type="EMBL" id="AP009366">
    <property type="protein sequence ID" value="BAF49752.1"/>
    <property type="molecule type" value="Genomic_DNA"/>
</dbReference>
<dbReference type="RefSeq" id="YP_001122928.1">
    <property type="nucleotide sequence ID" value="NC_009265.1"/>
</dbReference>
<dbReference type="GeneID" id="4968577"/>
<dbReference type="GO" id="GO:0009507">
    <property type="term" value="C:chloroplast"/>
    <property type="evidence" value="ECO:0007669"/>
    <property type="project" value="UniProtKB-SubCell"/>
</dbReference>
<dbReference type="GO" id="GO:0003723">
    <property type="term" value="F:RNA binding"/>
    <property type="evidence" value="ECO:0007669"/>
    <property type="project" value="UniProtKB-KW"/>
</dbReference>
<dbReference type="GO" id="GO:0006397">
    <property type="term" value="P:mRNA processing"/>
    <property type="evidence" value="ECO:0007669"/>
    <property type="project" value="UniProtKB-KW"/>
</dbReference>
<dbReference type="GO" id="GO:0008380">
    <property type="term" value="P:RNA splicing"/>
    <property type="evidence" value="ECO:0007669"/>
    <property type="project" value="UniProtKB-UniRule"/>
</dbReference>
<dbReference type="GO" id="GO:0008033">
    <property type="term" value="P:tRNA processing"/>
    <property type="evidence" value="ECO:0007669"/>
    <property type="project" value="UniProtKB-KW"/>
</dbReference>
<dbReference type="HAMAP" id="MF_01390">
    <property type="entry name" value="MatK"/>
    <property type="match status" value="1"/>
</dbReference>
<dbReference type="InterPro" id="IPR024937">
    <property type="entry name" value="Domain_X"/>
</dbReference>
<dbReference type="InterPro" id="IPR002866">
    <property type="entry name" value="Maturase_MatK"/>
</dbReference>
<dbReference type="InterPro" id="IPR024942">
    <property type="entry name" value="Maturase_MatK_N"/>
</dbReference>
<dbReference type="PANTHER" id="PTHR34811">
    <property type="entry name" value="MATURASE K"/>
    <property type="match status" value="1"/>
</dbReference>
<dbReference type="PANTHER" id="PTHR34811:SF1">
    <property type="entry name" value="MATURASE K"/>
    <property type="match status" value="1"/>
</dbReference>
<dbReference type="Pfam" id="PF01348">
    <property type="entry name" value="Intron_maturas2"/>
    <property type="match status" value="1"/>
</dbReference>
<dbReference type="Pfam" id="PF01824">
    <property type="entry name" value="MatK_N"/>
    <property type="match status" value="1"/>
</dbReference>
<organism>
    <name type="scientific">Aethionema cordifolium</name>
    <name type="common">Lebanon stonecress</name>
    <dbReference type="NCBI Taxonomy" id="434059"/>
    <lineage>
        <taxon>Eukaryota</taxon>
        <taxon>Viridiplantae</taxon>
        <taxon>Streptophyta</taxon>
        <taxon>Embryophyta</taxon>
        <taxon>Tracheophyta</taxon>
        <taxon>Spermatophyta</taxon>
        <taxon>Magnoliopsida</taxon>
        <taxon>eudicotyledons</taxon>
        <taxon>Gunneridae</taxon>
        <taxon>Pentapetalae</taxon>
        <taxon>rosids</taxon>
        <taxon>malvids</taxon>
        <taxon>Brassicales</taxon>
        <taxon>Brassicaceae</taxon>
        <taxon>Aethionemeae</taxon>
        <taxon>Aethionema</taxon>
    </lineage>
</organism>
<proteinExistence type="inferred from homology"/>
<sequence length="503" mass="60190">MEEFKGYFEFDRTRQQNFLYPLFFRESFYVLAYDHGLNRLNRNRSIFLENADYDKKYGSLIVKRLILRMYEQNHLIIPTKDLNHNPFFGHTNLFYYQMISVLFAVIVEIQFSLKLVSSFEGKLLKKSYNLKSIHSLFPFLEDKLLHFNYVVDVRIPYPIHLEILVQTLRYRVKDASSLHFFRFCLYEYCNYKNFDIQKKSILNPRFFLFLYNSHVCEYESLFLFLRKRSSHLRSTSSEVVFERILFYGKIQHLVKVFVNFPSILGFLKDPLIHYVRYHGKCILATKDTPLLMNKRKYYFVNLWQSYFSVWLQSEKVNINQLSKDTLEFLGYLSSLQLNPLVVRSQMLKNSFLIDNVRIKFDTKIPISSIIGSLSKEKFCNVLGHPVSKSSWTDSSDSEIRERFVRICRNLSHYYSGSSKKKNLYRIKYILRLCCVKTLARKHKSTVRAFLKRLGSGLLEEFLTGEGQIISLIFPRSYYASKRLYRNRIWYLDILFFNDLVNHE</sequence>
<protein>
    <recommendedName>
        <fullName evidence="1">Maturase K</fullName>
    </recommendedName>
    <alternativeName>
        <fullName evidence="1">Intron maturase</fullName>
    </alternativeName>
</protein>
<accession>A4QJ97</accession>
<comment type="function">
    <text evidence="1">Usually encoded in the trnK tRNA gene intron. Probably assists in splicing its own and other chloroplast group II introns.</text>
</comment>
<comment type="subcellular location">
    <subcellularLocation>
        <location>Plastid</location>
        <location>Chloroplast</location>
    </subcellularLocation>
</comment>
<comment type="similarity">
    <text evidence="1">Belongs to the intron maturase 2 family. MatK subfamily.</text>
</comment>
<evidence type="ECO:0000255" key="1">
    <source>
        <dbReference type="HAMAP-Rule" id="MF_01390"/>
    </source>
</evidence>
<keyword id="KW-0150">Chloroplast</keyword>
<keyword id="KW-0507">mRNA processing</keyword>
<keyword id="KW-0934">Plastid</keyword>
<keyword id="KW-0694">RNA-binding</keyword>
<keyword id="KW-0819">tRNA processing</keyword>
<gene>
    <name evidence="1" type="primary">matK</name>
</gene>
<geneLocation type="chloroplast"/>
<name>MATK_AETCO</name>
<feature type="chain" id="PRO_0000355910" description="Maturase K">
    <location>
        <begin position="1"/>
        <end position="503"/>
    </location>
</feature>
<reference key="1">
    <citation type="submission" date="2007-03" db="EMBL/GenBank/DDBJ databases">
        <title>Sequencing analysis of Aethionema coridifolium chloroplast DNA.</title>
        <authorList>
            <person name="Hosouchi T."/>
            <person name="Tsuruoka H."/>
            <person name="Kotani H."/>
        </authorList>
    </citation>
    <scope>NUCLEOTIDE SEQUENCE [LARGE SCALE GENOMIC DNA]</scope>
</reference>